<organism>
    <name type="scientific">Crimean-Congo hemorrhagic fever virus (strain Nigeria/IbAr10200/1970)</name>
    <name type="common">CCHFV</name>
    <dbReference type="NCBI Taxonomy" id="652961"/>
    <lineage>
        <taxon>Viruses</taxon>
        <taxon>Riboviria</taxon>
        <taxon>Orthornavirae</taxon>
        <taxon>Negarnaviricota</taxon>
        <taxon>Polyploviricotina</taxon>
        <taxon>Ellioviricetes</taxon>
        <taxon>Bunyavirales</taxon>
        <taxon>Nairoviridae</taxon>
        <taxon>Orthonairovirus</taxon>
        <taxon>Orthonairovirus haemorrhagiae</taxon>
    </lineage>
</organism>
<feature type="chain" id="PRO_0000396080" description="RNA-directed RNA polymerase L">
    <location>
        <begin position="1"/>
        <end position="3945"/>
    </location>
</feature>
<feature type="domain" description="OTU" evidence="4">
    <location>
        <begin position="29"/>
        <end position="158"/>
    </location>
</feature>
<feature type="domain" description="RdRp catalytic" evidence="5">
    <location>
        <begin position="2342"/>
        <end position="2551"/>
    </location>
</feature>
<feature type="region of interest" description="Essential for the vOTU enzymatic activity" evidence="10">
    <location>
        <begin position="1"/>
        <end position="28"/>
    </location>
</feature>
<feature type="region of interest" description="Endonuclease" evidence="2">
    <location>
        <begin position="625"/>
        <end position="806"/>
    </location>
</feature>
<feature type="region of interest" description="Disordered" evidence="6">
    <location>
        <begin position="763"/>
        <end position="790"/>
    </location>
</feature>
<feature type="region of interest" description="Disordered" evidence="6">
    <location>
        <begin position="2712"/>
        <end position="2744"/>
    </location>
</feature>
<feature type="compositionally biased region" description="Low complexity" evidence="6">
    <location>
        <begin position="2715"/>
        <end position="2744"/>
    </location>
</feature>
<feature type="active site" description="For ubiquitin thioesterase activity" evidence="8 10">
    <location>
        <position position="40"/>
    </location>
</feature>
<feature type="active site" description="For ubiquitin thioesterase activity" evidence="8 10 14">
    <location>
        <position position="151"/>
    </location>
</feature>
<feature type="active site" description="For ubiquitin thioesterase activity" evidence="8 10">
    <location>
        <position position="153"/>
    </location>
</feature>
<feature type="active site" description="For endonuclease activity" evidence="1">
    <location>
        <position position="734"/>
    </location>
</feature>
<feature type="binding site" evidence="3">
    <location>
        <position position="632"/>
    </location>
    <ligand>
        <name>Mn(2+)</name>
        <dbReference type="ChEBI" id="CHEBI:29035"/>
        <label>1</label>
    </ligand>
</feature>
<feature type="binding site" evidence="3">
    <location>
        <position position="693"/>
    </location>
    <ligand>
        <name>Mn(2+)</name>
        <dbReference type="ChEBI" id="CHEBI:29035"/>
        <label>1</label>
    </ligand>
</feature>
<feature type="binding site" evidence="3">
    <location>
        <position position="693"/>
    </location>
    <ligand>
        <name>Mn(2+)</name>
        <dbReference type="ChEBI" id="CHEBI:29035"/>
        <label>2</label>
    </ligand>
</feature>
<feature type="binding site" evidence="2">
    <location>
        <position position="718"/>
    </location>
    <ligand>
        <name>Mn(2+)</name>
        <dbReference type="ChEBI" id="CHEBI:29035"/>
        <label>1</label>
    </ligand>
</feature>
<feature type="binding site" evidence="1">
    <location>
        <position position="2518"/>
    </location>
    <ligand>
        <name>Mg(2+)</name>
        <dbReference type="ChEBI" id="CHEBI:18420"/>
        <note>catalytic; for RdRp activity</note>
    </ligand>
</feature>
<feature type="mutagenesis site" description="Increase of 50% in debubiquitination activity." evidence="11">
    <original>T</original>
    <variation>E</variation>
    <location>
        <position position="10"/>
    </location>
</feature>
<feature type="mutagenesis site" description="Complete loss of debubiquitination activity. No effect on deISGylation. Unable to block RIG-I-mediated gene activation." evidence="10 12">
    <original>Q</original>
    <variation>R</variation>
    <location>
        <position position="16"/>
    </location>
</feature>
<feature type="mutagenesis site" description="Almost complete loss of OTU proteolytic activity. Unable to block RIG-I-mediated gene activation." evidence="8 10 12">
    <original>C</original>
    <variation>A</variation>
    <location>
        <position position="40"/>
    </location>
</feature>
<feature type="mutagenesis site" description="Loss of deubiquitinating and deISGylase activities." evidence="7">
    <original>C</original>
    <variation>A</variation>
    <location>
        <position position="40"/>
    </location>
</feature>
<feature type="mutagenesis site" description="Complete loss of deISGylation and debubiquitination activities." evidence="10 12">
    <original>P</original>
    <variation>D</variation>
    <location>
        <position position="77"/>
    </location>
</feature>
<feature type="mutagenesis site" description="Almost complete loss of OTU proteolytic activity.">
    <original>W</original>
    <variation>A</variation>
    <location>
        <position position="99"/>
    </location>
</feature>
<feature type="mutagenesis site" description="More than 60% loss of deISGylation and debubiquitination activities." evidence="11">
    <original>S</original>
    <variation>G</variation>
    <location>
        <position position="101"/>
    </location>
</feature>
<feature type="mutagenesis site" description="Loss of 40% activity for debubiquitination and 75% for deISGylation activity." evidence="11">
    <original>E</original>
    <variation>T</variation>
    <location>
        <position position="128"/>
    </location>
</feature>
<feature type="mutagenesis site" description="Complete loss of deISGylation and debubiquitination activities. Unable to block RIG-I-mediated gene activation." evidence="12">
    <original>A</original>
    <variation>R</variation>
    <location>
        <position position="129"/>
    </location>
</feature>
<feature type="mutagenesis site" description="350-fold loss of proteolytic activity." evidence="8">
    <original>H</original>
    <variation>A</variation>
    <location>
        <position position="151"/>
    </location>
</feature>
<feature type="mutagenesis site" description="Loss of deubiquitinating and deISGylase activities; when associated with Ala-40." evidence="7">
    <original>H</original>
    <variation>A</variation>
    <location>
        <position position="151"/>
    </location>
</feature>
<feature type="mutagenesis site" description="40-fold loss of proteolytic activity." evidence="8">
    <original>D</original>
    <variation>A</variation>
    <location>
        <position position="153"/>
    </location>
</feature>
<feature type="sequence conflict" description="In Ref. 2; AAR25663." evidence="13" ref="2">
    <original>E</original>
    <variation>G</variation>
    <location>
        <position position="1047"/>
    </location>
</feature>
<feature type="sequence conflict" description="In Ref. 2; AAR25663." evidence="13" ref="2">
    <original>T</original>
    <variation>P</variation>
    <location>
        <position position="1660"/>
    </location>
</feature>
<feature type="sequence conflict" description="In Ref. 2; AAR25663." evidence="13" ref="2">
    <original>N</original>
    <variation>T</variation>
    <location>
        <position position="1675"/>
    </location>
</feature>
<feature type="sequence conflict" description="In Ref. 1; AAQ98866." evidence="13" ref="1">
    <original>VSSA</original>
    <variation>ASST</variation>
    <location>
        <begin position="2675"/>
        <end position="2678"/>
    </location>
</feature>
<feature type="helix" evidence="28">
    <location>
        <begin position="3"/>
        <end position="6"/>
    </location>
</feature>
<feature type="strand" evidence="28">
    <location>
        <begin position="10"/>
        <end position="13"/>
    </location>
</feature>
<feature type="strand" evidence="28">
    <location>
        <begin position="16"/>
        <end position="19"/>
    </location>
</feature>
<feature type="helix" evidence="28">
    <location>
        <begin position="25"/>
        <end position="28"/>
    </location>
</feature>
<feature type="strand" evidence="28">
    <location>
        <begin position="29"/>
        <end position="32"/>
    </location>
</feature>
<feature type="strand" evidence="27">
    <location>
        <begin position="36"/>
        <end position="38"/>
    </location>
</feature>
<feature type="helix" evidence="28">
    <location>
        <begin position="40"/>
        <end position="49"/>
    </location>
</feature>
<feature type="strand" evidence="29">
    <location>
        <begin position="50"/>
        <end position="52"/>
    </location>
</feature>
<feature type="turn" evidence="28">
    <location>
        <begin position="55"/>
        <end position="57"/>
    </location>
</feature>
<feature type="helix" evidence="28">
    <location>
        <begin position="58"/>
        <end position="72"/>
    </location>
</feature>
<feature type="helix" evidence="28">
    <location>
        <begin position="73"/>
        <end position="75"/>
    </location>
</feature>
<feature type="helix" evidence="28">
    <location>
        <begin position="79"/>
        <end position="82"/>
    </location>
</feature>
<feature type="helix" evidence="28">
    <location>
        <begin position="86"/>
        <end position="93"/>
    </location>
</feature>
<feature type="helix" evidence="28">
    <location>
        <begin position="102"/>
        <end position="112"/>
    </location>
</feature>
<feature type="strand" evidence="28">
    <location>
        <begin position="116"/>
        <end position="135"/>
    </location>
</feature>
<feature type="turn" evidence="28">
    <location>
        <begin position="138"/>
        <end position="140"/>
    </location>
</feature>
<feature type="strand" evidence="28">
    <location>
        <begin position="141"/>
        <end position="147"/>
    </location>
</feature>
<feature type="turn" evidence="28">
    <location>
        <begin position="148"/>
        <end position="150"/>
    </location>
</feature>
<feature type="strand" evidence="28">
    <location>
        <begin position="151"/>
        <end position="157"/>
    </location>
</feature>
<feature type="helix" evidence="28">
    <location>
        <begin position="159"/>
        <end position="161"/>
    </location>
</feature>
<feature type="helix" evidence="22">
    <location>
        <begin position="171"/>
        <end position="182"/>
    </location>
</feature>
<keyword id="KW-0002">3D-structure</keyword>
<keyword id="KW-0945">Host-virus interaction</keyword>
<keyword id="KW-0378">Hydrolase</keyword>
<keyword id="KW-1090">Inhibition of host innate immune response by virus</keyword>
<keyword id="KW-1114">Inhibition of host interferon signaling pathway by virus</keyword>
<keyword id="KW-1095">Inhibition of host ISG15 by virus</keyword>
<keyword id="KW-0922">Interferon antiviral system evasion</keyword>
<keyword id="KW-0460">Magnesium</keyword>
<keyword id="KW-0464">Manganese</keyword>
<keyword id="KW-0479">Metal-binding</keyword>
<keyword id="KW-1127">Modulation of host ubiquitin pathway by viral deubiquitinase</keyword>
<keyword id="KW-1130">Modulation of host ubiquitin pathway by virus</keyword>
<keyword id="KW-0547">Nucleotide-binding</keyword>
<keyword id="KW-0548">Nucleotidyltransferase</keyword>
<keyword id="KW-1185">Reference proteome</keyword>
<keyword id="KW-0696">RNA-directed RNA polymerase</keyword>
<keyword id="KW-0808">Transferase</keyword>
<keyword id="KW-0899">Viral immunoevasion</keyword>
<keyword id="KW-0693">Viral RNA replication</keyword>
<evidence type="ECO:0000250" key="1">
    <source>
        <dbReference type="UniProtKB" id="I0DF35"/>
    </source>
</evidence>
<evidence type="ECO:0000250" key="2">
    <source>
        <dbReference type="UniProtKB" id="Q66431"/>
    </source>
</evidence>
<evidence type="ECO:0000250" key="3">
    <source>
        <dbReference type="UniProtKB" id="Q6GWS6"/>
    </source>
</evidence>
<evidence type="ECO:0000255" key="4">
    <source>
        <dbReference type="PROSITE-ProRule" id="PRU00139"/>
    </source>
</evidence>
<evidence type="ECO:0000255" key="5">
    <source>
        <dbReference type="PROSITE-ProRule" id="PRU00539"/>
    </source>
</evidence>
<evidence type="ECO:0000256" key="6">
    <source>
        <dbReference type="SAM" id="MobiDB-lite"/>
    </source>
</evidence>
<evidence type="ECO:0000269" key="7">
    <source>
    </source>
</evidence>
<evidence type="ECO:0000269" key="8">
    <source>
    </source>
</evidence>
<evidence type="ECO:0000269" key="9">
    <source>
    </source>
</evidence>
<evidence type="ECO:0000269" key="10">
    <source>
    </source>
</evidence>
<evidence type="ECO:0000269" key="11">
    <source>
    </source>
</evidence>
<evidence type="ECO:0000269" key="12">
    <source>
    </source>
</evidence>
<evidence type="ECO:0000305" key="13"/>
<evidence type="ECO:0000305" key="14">
    <source>
    </source>
</evidence>
<evidence type="ECO:0007744" key="15">
    <source>
        <dbReference type="PDB" id="3PHU"/>
    </source>
</evidence>
<evidence type="ECO:0007744" key="16">
    <source>
        <dbReference type="PDB" id="3PHW"/>
    </source>
</evidence>
<evidence type="ECO:0007744" key="17">
    <source>
        <dbReference type="PDB" id="3PHX"/>
    </source>
</evidence>
<evidence type="ECO:0007744" key="18">
    <source>
        <dbReference type="PDB" id="3ZNH"/>
    </source>
</evidence>
<evidence type="ECO:0007744" key="19">
    <source>
        <dbReference type="PDB" id="5V5G"/>
    </source>
</evidence>
<evidence type="ECO:0007744" key="20">
    <source>
        <dbReference type="PDB" id="5V5H"/>
    </source>
</evidence>
<evidence type="ECO:0007744" key="21">
    <source>
        <dbReference type="PDB" id="5V5I"/>
    </source>
</evidence>
<evidence type="ECO:0007829" key="22">
    <source>
        <dbReference type="PDB" id="3PHU"/>
    </source>
</evidence>
<evidence type="ECO:0007829" key="23">
    <source>
        <dbReference type="PDB" id="3PRM"/>
    </source>
</evidence>
<evidence type="ECO:0007829" key="24">
    <source>
        <dbReference type="PDB" id="3PRP"/>
    </source>
</evidence>
<evidence type="ECO:0007829" key="25">
    <source>
        <dbReference type="PDB" id="3PSE"/>
    </source>
</evidence>
<evidence type="ECO:0007829" key="26">
    <source>
        <dbReference type="PDB" id="3PT2"/>
    </source>
</evidence>
<evidence type="ECO:0007829" key="27">
    <source>
        <dbReference type="PDB" id="5V5G"/>
    </source>
</evidence>
<evidence type="ECO:0007829" key="28">
    <source>
        <dbReference type="PDB" id="5V5H"/>
    </source>
</evidence>
<evidence type="ECO:0007829" key="29">
    <source>
        <dbReference type="PDB" id="5V5I"/>
    </source>
</evidence>
<reference key="1">
    <citation type="submission" date="2003-11" db="EMBL/GenBank/DDBJ databases">
        <title>Partial sequence of CCHF virus L segment.</title>
        <authorList>
            <person name="Meissner J.D."/>
            <person name="Nichol S.T."/>
            <person name="StJeor S.C."/>
        </authorList>
    </citation>
    <scope>NUCLEOTIDE SEQUENCE [GENOMIC RNA]</scope>
</reference>
<reference key="2">
    <citation type="journal article" date="2004" name="Virology">
        <title>Sequence determination of the Crimean-Congo hemorrhagic fever virus L segment.</title>
        <authorList>
            <person name="Kinsella E."/>
            <person name="Martin S.G."/>
            <person name="Grolla A."/>
            <person name="Czub M."/>
            <person name="Feldmann H."/>
            <person name="Flick R."/>
        </authorList>
    </citation>
    <scope>NUCLEOTIDE SEQUENCE [GENOMIC RNA]</scope>
</reference>
<reference key="3">
    <citation type="journal article" date="2004" name="Virology">
        <title>Crimean-Congo hemorrhagic fever virus genome L RNA segment and encoded protein.</title>
        <authorList>
            <person name="Honig J.E."/>
            <person name="Osborne J.C."/>
            <person name="Nichol S.T."/>
        </authorList>
    </citation>
    <scope>NUCLEOTIDE SEQUENCE [GENOMIC RNA]</scope>
</reference>
<reference key="4">
    <citation type="journal article" date="2007" name="Cell Host Microbe">
        <title>Ovarian tumor domain-containing viral proteases evade ubiquitin- and ISG15-dependent innate immune responses.</title>
        <authorList>
            <person name="Frias-Staheli N."/>
            <person name="Giannakopoulos N.V."/>
            <person name="Kikkert M."/>
            <person name="Taylor S.L."/>
            <person name="Bridgen A."/>
            <person name="Paragas J."/>
            <person name="Richt J.A."/>
            <person name="Rowland R.R."/>
            <person name="Schmaljohn C.S."/>
            <person name="Lenschow D.J."/>
            <person name="Snijder E.J."/>
            <person name="Garcia-Sastre A."/>
            <person name="Virgin H.W."/>
        </authorList>
    </citation>
    <scope>FUNCTION</scope>
    <scope>MUTAGENESIS OF CYS-40 AND HIS-151</scope>
    <scope>CATALYTIC ACTIVITY</scope>
</reference>
<reference key="5">
    <citation type="journal article" date="2013" name="J. Virol.">
        <title>Diversity of ubiquitin and ISG15 specificity among nairoviruses' viral ovarian tumor domain proteases.</title>
        <authorList>
            <person name="Capodagli G.C."/>
            <person name="Deaton M.K."/>
            <person name="Baker E.A."/>
            <person name="Lumpkin R.J."/>
            <person name="Pegan S.D."/>
        </authorList>
    </citation>
    <scope>BIOPHYSICOCHEMICAL PROPERTIES</scope>
    <scope>FUNCTION</scope>
    <scope>MUTAGENESIS OF THR-10; SER-101 AND GLU-128</scope>
    <scope>DOMAIN</scope>
    <scope>CATALYTIC ACTIVITY</scope>
</reference>
<reference key="6">
    <citation type="journal article" date="2017" name="Crit. Rev. Microbiol.">
        <title>Bunyaviridae RdRps: structure, motifs, and RNA synthesis machinery.</title>
        <authorList>
            <person name="Amroun A."/>
            <person name="Priet S."/>
            <person name="de Lamballerie X."/>
            <person name="Querat G."/>
        </authorList>
    </citation>
    <scope>REVIEW</scope>
</reference>
<reference key="7">
    <citation type="journal article" date="2017" name="Cell Rep.">
        <title>Crimean-Congo Hemorrhagic Fever Virus Suppresses Innate Immune Responses via a Ubiquitin and ISG15 Specific Protease.</title>
        <authorList>
            <person name="Scholte F.E.M."/>
            <person name="Zivcec M."/>
            <person name="Dzimianski J.V."/>
            <person name="Deaton M.K."/>
            <person name="Spengler J.R."/>
            <person name="Welch S.R."/>
            <person name="Nichol S.T."/>
            <person name="Pegan S.D."/>
            <person name="Spiropoulou C.F."/>
            <person name="Bergeron E."/>
        </authorList>
    </citation>
    <scope>FUNCTION</scope>
    <scope>MUTAGENESIS OF GLN-16; CYS-40; PRO-77 AND ALA-129</scope>
    <scope>CATALYTIC ACTIVITY</scope>
</reference>
<reference evidence="15 16 17" key="8">
    <citation type="journal article" date="2011" name="Proc. Natl. Acad. Sci. U.S.A.">
        <title>Molecular basis for ubiquitin and ISG15 cross-reactivity in viral ovarian tumor domains.</title>
        <authorList>
            <person name="Akutsu M."/>
            <person name="Ye Y."/>
            <person name="Virdee S."/>
            <person name="Chin J.W."/>
            <person name="Komander D."/>
        </authorList>
    </citation>
    <scope>X-RAY CRYSTALLOGRAPHY (1.60 ANGSTROMS) OF 1-183 IN COMPLEX WITH UBIQUITIN AND ISG15</scope>
    <scope>FUNCTION</scope>
    <scope>CATALYTIC ACTIVITY</scope>
    <scope>DOMAIN</scope>
    <scope>ACTIVE SITE</scope>
    <scope>INTERACTION WITH HOST UBIQUITIN</scope>
    <scope>INTERACTION WITH HOST ISG15</scope>
    <scope>MUTAGENESIS OF GLN-16 AND PRO-77</scope>
</reference>
<reference evidence="23 24" key="9">
    <citation type="journal article" date="2011" name="J. Virol.">
        <title>Structural analysis of a viral ovarian tumor domain protease from the Crimean-Congo hemorrhagic fever virus in complex with covalently bonded ubiquitin.</title>
        <authorList>
            <person name="Capodagli G.C."/>
            <person name="McKercher M.A."/>
            <person name="Baker E.A."/>
            <person name="Masters E.M."/>
            <person name="Brunzelle J.S."/>
            <person name="Pegan S.D."/>
        </authorList>
    </citation>
    <scope>X-RAY CRYSTALLOGRAPHY (1.70 ANGSTROMS) OF 1-170</scope>
    <scope>CATALYTIC ACTIVITY</scope>
    <scope>FUNCTION</scope>
    <scope>ACTIVE SITE</scope>
    <scope>MUTAGENESIS OF CYS-40; TRP-99; HIS-151 AND ASP-153</scope>
    <scope>INTERACTION WITH HOST UBIQUITIN</scope>
</reference>
<reference evidence="25 26" key="10">
    <citation type="journal article" date="2011" name="Proc. Natl. Acad. Sci. U.S.A.">
        <title>Structural basis for the removal of ubiquitin and interferon-stimulated gene 15 by a viral ovarian tumor domain-containing protease.</title>
        <authorList>
            <person name="James T.W."/>
            <person name="Frias-Staheli N."/>
            <person name="Bacik J.P."/>
            <person name="Levingston Macleod J.M."/>
            <person name="Khajehpour M."/>
            <person name="Garcia-Sastre A."/>
            <person name="Mark B.L."/>
        </authorList>
    </citation>
    <scope>X-RAY CRYSTALLOGRAPHY (2.30 ANGSTROMS) OF 1-169</scope>
    <scope>INTERACTION WITH HOST UBIQUITIN</scope>
    <scope>INTERACTION WITH HOST ISG15</scope>
    <scope>FUNCTION</scope>
</reference>
<reference evidence="18" key="11">
    <citation type="journal article" date="2013" name="J. Am. Chem. Soc.">
        <title>On terminal alkynes that can react with active-site cysteine nucleophiles in proteases.</title>
        <authorList>
            <person name="Ekkebus R."/>
            <person name="van Kasteren S.I."/>
            <person name="Kulathu Y."/>
            <person name="Scholten A."/>
            <person name="Berlin I."/>
            <person name="Geurink P.P."/>
            <person name="de Jong A."/>
            <person name="Goerdayal S."/>
            <person name="Neefjes J."/>
            <person name="Heck A.J."/>
            <person name="Komander D."/>
            <person name="Ovaa H."/>
        </authorList>
    </citation>
    <scope>X-RAY CRYSTALLOGRAPHY (2.30 ANGSTROMS) OF 1-183</scope>
</reference>
<reference evidence="19 20 21" key="12">
    <citation type="journal article" date="2017" name="PLoS Pathog.">
        <title>Potent and selective inhibition of pathogenic viruses by engineered ubiquitin variants.</title>
        <authorList>
            <person name="Zhang W."/>
            <person name="Bailey-Elkin B.A."/>
            <person name="Knaap R.C.M."/>
            <person name="Khare B."/>
            <person name="Dalebout T.J."/>
            <person name="Johnson G.G."/>
            <person name="van Kasteren P.B."/>
            <person name="McLeish N.J."/>
            <person name="Gu J."/>
            <person name="He W."/>
            <person name="Kikkert M."/>
            <person name="Mark B.L."/>
            <person name="Sidhu S.S."/>
        </authorList>
    </citation>
    <scope>X-RAY CRYSTALLOGRAPHY (1.50 ANGSTROMS) OF 1-169</scope>
</reference>
<dbReference type="EC" id="3.4.19.12" evidence="7 8 10 12"/>
<dbReference type="EC" id="3.4.22.-" evidence="8 12"/>
<dbReference type="EC" id="3.1.-.-" evidence="3"/>
<dbReference type="EC" id="2.7.7.48"/>
<dbReference type="EMBL" id="AY422209">
    <property type="protein sequence ID" value="AAQ98866.2"/>
    <property type="molecule type" value="Genomic_RNA"/>
</dbReference>
<dbReference type="EMBL" id="AY389361">
    <property type="protein sequence ID" value="AAR25663.2"/>
    <property type="molecule type" value="Genomic_RNA"/>
</dbReference>
<dbReference type="EMBL" id="AY389508">
    <property type="protein sequence ID" value="AAQ90157.2"/>
    <property type="molecule type" value="Genomic_RNA"/>
</dbReference>
<dbReference type="PDB" id="3PHU">
    <property type="method" value="X-ray"/>
    <property type="resolution" value="2.20 A"/>
    <property type="chains" value="A/B=1-217"/>
</dbReference>
<dbReference type="PDB" id="3PHW">
    <property type="method" value="X-ray"/>
    <property type="resolution" value="2.00 A"/>
    <property type="chains" value="A/C/E/G=1-183"/>
</dbReference>
<dbReference type="PDB" id="3PHX">
    <property type="method" value="X-ray"/>
    <property type="resolution" value="1.60 A"/>
    <property type="chains" value="A=1-183"/>
</dbReference>
<dbReference type="PDB" id="3PRM">
    <property type="method" value="X-ray"/>
    <property type="resolution" value="2.30 A"/>
    <property type="chains" value="A/C=1-170"/>
</dbReference>
<dbReference type="PDB" id="3PRP">
    <property type="method" value="X-ray"/>
    <property type="resolution" value="1.70 A"/>
    <property type="chains" value="A/C=1-170"/>
</dbReference>
<dbReference type="PDB" id="3PSE">
    <property type="method" value="X-ray"/>
    <property type="resolution" value="2.30 A"/>
    <property type="chains" value="A=1-169"/>
</dbReference>
<dbReference type="PDB" id="3PT2">
    <property type="method" value="X-ray"/>
    <property type="resolution" value="2.50 A"/>
    <property type="chains" value="A=1-184"/>
</dbReference>
<dbReference type="PDB" id="3ZNH">
    <property type="method" value="X-ray"/>
    <property type="resolution" value="2.30 A"/>
    <property type="chains" value="A=1-183"/>
</dbReference>
<dbReference type="PDB" id="5V5G">
    <property type="method" value="X-ray"/>
    <property type="resolution" value="2.10 A"/>
    <property type="chains" value="A/C=1-183"/>
</dbReference>
<dbReference type="PDB" id="5V5H">
    <property type="method" value="X-ray"/>
    <property type="resolution" value="1.50 A"/>
    <property type="chains" value="A=1-169"/>
</dbReference>
<dbReference type="PDB" id="5V5I">
    <property type="method" value="X-ray"/>
    <property type="resolution" value="2.20 A"/>
    <property type="chains" value="A/C=1-169"/>
</dbReference>
<dbReference type="PDBsum" id="3PHU"/>
<dbReference type="PDBsum" id="3PHW"/>
<dbReference type="PDBsum" id="3PHX"/>
<dbReference type="PDBsum" id="3PRM"/>
<dbReference type="PDBsum" id="3PRP"/>
<dbReference type="PDBsum" id="3PSE"/>
<dbReference type="PDBsum" id="3PT2"/>
<dbReference type="PDBsum" id="3ZNH"/>
<dbReference type="PDBsum" id="5V5G"/>
<dbReference type="PDBsum" id="5V5H"/>
<dbReference type="PDBsum" id="5V5I"/>
<dbReference type="SMR" id="Q6TQR6"/>
<dbReference type="DIP" id="DIP-60307N"/>
<dbReference type="IntAct" id="Q6TQR6">
    <property type="interactions" value="1"/>
</dbReference>
<dbReference type="MEROPS" id="C87.001"/>
<dbReference type="KEGG" id="vg:2943075"/>
<dbReference type="EvolutionaryTrace" id="Q6TQR6"/>
<dbReference type="PRO" id="PR:Q6TQR6"/>
<dbReference type="Proteomes" id="UP000008767">
    <property type="component" value="Genome"/>
</dbReference>
<dbReference type="GO" id="GO:0004843">
    <property type="term" value="F:cysteine-type deubiquitinase activity"/>
    <property type="evidence" value="ECO:0007669"/>
    <property type="project" value="UniProtKB-EC"/>
</dbReference>
<dbReference type="GO" id="GO:0046872">
    <property type="term" value="F:metal ion binding"/>
    <property type="evidence" value="ECO:0007669"/>
    <property type="project" value="UniProtKB-KW"/>
</dbReference>
<dbReference type="GO" id="GO:0000166">
    <property type="term" value="F:nucleotide binding"/>
    <property type="evidence" value="ECO:0007669"/>
    <property type="project" value="UniProtKB-KW"/>
</dbReference>
<dbReference type="GO" id="GO:0003968">
    <property type="term" value="F:RNA-directed RNA polymerase activity"/>
    <property type="evidence" value="ECO:0007669"/>
    <property type="project" value="UniProtKB-KW"/>
</dbReference>
<dbReference type="GO" id="GO:0006351">
    <property type="term" value="P:DNA-templated transcription"/>
    <property type="evidence" value="ECO:0007669"/>
    <property type="project" value="InterPro"/>
</dbReference>
<dbReference type="GO" id="GO:0030968">
    <property type="term" value="P:endoplasmic reticulum unfolded protein response"/>
    <property type="evidence" value="ECO:0007669"/>
    <property type="project" value="TreeGrafter"/>
</dbReference>
<dbReference type="GO" id="GO:0036503">
    <property type="term" value="P:ERAD pathway"/>
    <property type="evidence" value="ECO:0007669"/>
    <property type="project" value="TreeGrafter"/>
</dbReference>
<dbReference type="GO" id="GO:0039689">
    <property type="term" value="P:negative stranded viral RNA replication"/>
    <property type="evidence" value="ECO:0000250"/>
    <property type="project" value="UniProtKB"/>
</dbReference>
<dbReference type="GO" id="GO:0016579">
    <property type="term" value="P:protein deubiquitination"/>
    <property type="evidence" value="ECO:0007669"/>
    <property type="project" value="TreeGrafter"/>
</dbReference>
<dbReference type="GO" id="GO:0039696">
    <property type="term" value="P:RNA-templated viral transcription"/>
    <property type="evidence" value="ECO:0000250"/>
    <property type="project" value="UniProtKB"/>
</dbReference>
<dbReference type="GO" id="GO:0039648">
    <property type="term" value="P:symbiont-mediated perturbation of host ubiquitin-like protein modification"/>
    <property type="evidence" value="ECO:0007669"/>
    <property type="project" value="UniProtKB-KW"/>
</dbReference>
<dbReference type="GO" id="GO:0039540">
    <property type="term" value="P:symbiont-mediated suppression of host cytoplasmic pattern recognition receptor signaling pathway via inhibition of RIG-I activity"/>
    <property type="evidence" value="ECO:0000269"/>
    <property type="project" value="SigSci"/>
</dbReference>
<dbReference type="GO" id="GO:0039579">
    <property type="term" value="P:symbiont-mediated suppression of host ISG15-protein conjugation"/>
    <property type="evidence" value="ECO:0007669"/>
    <property type="project" value="UniProtKB-KW"/>
</dbReference>
<dbReference type="GO" id="GO:0039502">
    <property type="term" value="P:symbiont-mediated suppression of host type I interferon-mediated signaling pathway"/>
    <property type="evidence" value="ECO:0007669"/>
    <property type="project" value="UniProtKB-KW"/>
</dbReference>
<dbReference type="CDD" id="cd21880">
    <property type="entry name" value="OTU_RNAP_L_virus"/>
    <property type="match status" value="1"/>
</dbReference>
<dbReference type="FunFam" id="3.90.70.80:FF:000035">
    <property type="entry name" value="RNA-directed RNA polymerase L"/>
    <property type="match status" value="1"/>
</dbReference>
<dbReference type="Gene3D" id="3.90.70.80">
    <property type="match status" value="1"/>
</dbReference>
<dbReference type="InterPro" id="IPR049605">
    <property type="entry name" value="L_OTU"/>
</dbReference>
<dbReference type="InterPro" id="IPR029124">
    <property type="entry name" value="L_protein_N"/>
</dbReference>
<dbReference type="InterPro" id="IPR003323">
    <property type="entry name" value="OTU_dom"/>
</dbReference>
<dbReference type="InterPro" id="IPR038765">
    <property type="entry name" value="Papain-like_cys_pep_sf"/>
</dbReference>
<dbReference type="InterPro" id="IPR015843">
    <property type="entry name" value="RNA-dir_pol_nairovirus"/>
</dbReference>
<dbReference type="InterPro" id="IPR007099">
    <property type="entry name" value="RNA-dir_pol_NSvirus"/>
</dbReference>
<dbReference type="InterPro" id="IPR007322">
    <property type="entry name" value="RNA_pol_bunyavir"/>
</dbReference>
<dbReference type="PANTHER" id="PTHR13312">
    <property type="entry name" value="HIV-INDUCED PROTEIN-7-LIKE PROTEASE"/>
    <property type="match status" value="1"/>
</dbReference>
<dbReference type="PANTHER" id="PTHR13312:SF0">
    <property type="entry name" value="UBIQUITIN THIOESTERASE OTU1"/>
    <property type="match status" value="1"/>
</dbReference>
<dbReference type="Pfam" id="PF04196">
    <property type="entry name" value="Bunya_RdRp"/>
    <property type="match status" value="1"/>
</dbReference>
<dbReference type="Pfam" id="PF15518">
    <property type="entry name" value="L_protein_N"/>
    <property type="match status" value="1"/>
</dbReference>
<dbReference type="Pfam" id="PF02338">
    <property type="entry name" value="OTU"/>
    <property type="match status" value="1"/>
</dbReference>
<dbReference type="PIRSF" id="PIRSF036900">
    <property type="entry name" value="RdRPol_NRV"/>
    <property type="match status" value="1"/>
</dbReference>
<dbReference type="SUPFAM" id="SSF54001">
    <property type="entry name" value="Cysteine proteinases"/>
    <property type="match status" value="1"/>
</dbReference>
<dbReference type="PROSITE" id="PS50802">
    <property type="entry name" value="OTU"/>
    <property type="match status" value="1"/>
</dbReference>
<dbReference type="PROSITE" id="PS50525">
    <property type="entry name" value="RDRP_SSRNA_NEG_SEG"/>
    <property type="match status" value="1"/>
</dbReference>
<name>L_CCHFI</name>
<protein>
    <recommendedName>
        <fullName>RNA-directed RNA polymerase L</fullName>
        <shortName>Protein L</shortName>
    </recommendedName>
    <alternativeName>
        <fullName>Large structural protein</fullName>
    </alternativeName>
    <alternativeName>
        <fullName>Replicase</fullName>
    </alternativeName>
    <alternativeName>
        <fullName>Transcriptase</fullName>
    </alternativeName>
    <domain>
        <recommendedName>
            <fullName>Ubiquitinyl hydrolase</fullName>
            <ecNumber evidence="7 8 10 12">3.4.19.12</ecNumber>
            <ecNumber evidence="8 12">3.4.22.-</ecNumber>
        </recommendedName>
    </domain>
    <domain>
        <recommendedName>
            <fullName>cap-snatching endonuclease</fullName>
            <ecNumber evidence="3">3.1.-.-</ecNumber>
        </recommendedName>
    </domain>
    <domain>
        <recommendedName>
            <fullName>RNA-directed RNA polymerase</fullName>
            <ecNumber>2.7.7.48</ecNumber>
        </recommendedName>
    </domain>
</protein>
<proteinExistence type="evidence at protein level"/>
<comment type="function">
    <text evidence="3 7 8 9 10 11 12">Displays RNA-directed RNA polymerase, deubiquitinating and deISGylase activities (PubMed:18078692, PubMed:21228232, PubMed:21245344, PubMed:23345508). RNA-dependent RNA polymerase is responsible for replication and transcription of the viral RNA genome (PubMed:18078692). During transcription, synthesizes subgenomic RNAs and assures their capping by a cap-snatching mechanism, which involves the endonuclease activity cleaving the host capped pre-mRNAs (By similarity). These short capped RNAs are then used as primers for viral transcription (By similarity). The deubiquitinating and deISGylating activities specifically cleaves poly-ubiquitinated conjugates and ISG15 from RIG-I, interfering with antiviral signaling pathways mediated by NF-kappaB and IRF signalings (PubMed:18078692, PubMed:21266548, PubMed:28877473). Deubiquitinates mono-ubiquitinated, K48- and K63-linked tetra-ubiquitinated molecules (PubMed:21228232). Favors K63 poly-Ub linkage (PubMed:23345508).</text>
</comment>
<comment type="catalytic activity">
    <reaction evidence="7 8 11 12">
        <text>Thiol-dependent hydrolysis of ester, thioester, amide, peptide and isopeptide bonds formed by the C-terminal Gly of ubiquitin (a 76-residue protein attached to proteins as an intracellular targeting signal).</text>
        <dbReference type="EC" id="3.4.19.12"/>
    </reaction>
</comment>
<comment type="catalytic activity">
    <reaction evidence="5">
        <text>RNA(n) + a ribonucleoside 5'-triphosphate = RNA(n+1) + diphosphate</text>
        <dbReference type="Rhea" id="RHEA:21248"/>
        <dbReference type="Rhea" id="RHEA-COMP:14527"/>
        <dbReference type="Rhea" id="RHEA-COMP:17342"/>
        <dbReference type="ChEBI" id="CHEBI:33019"/>
        <dbReference type="ChEBI" id="CHEBI:61557"/>
        <dbReference type="ChEBI" id="CHEBI:140395"/>
        <dbReference type="EC" id="2.7.7.48"/>
    </reaction>
</comment>
<comment type="biophysicochemical properties">
    <kinetics>
        <KM evidence="11">3.8 uM for Ub-AMC</KM>
        <KM evidence="11">2.2 uM for ISG15-AMC</KM>
    </kinetics>
</comment>
<comment type="subunit">
    <text evidence="9 10">Interacts (via N-terminus) with host ISG15 (via C-terminus); the deISGylase activity of the viral protein interferes with antiviral signaling pathways mediated by NF-kappaB and IRF signalings (PubMed:21245344, PubMed:21266548). Interacts with host ubiquitin (PubMed:21245344).</text>
</comment>
<comment type="interaction">
    <interactant intactId="EBI-4403908">
        <id>Q6TQR6</id>
    </interactant>
    <interactant intactId="EBI-746466">
        <id>P05161</id>
        <label>ISG15</label>
    </interactant>
    <organismsDiffer>true</organismsDiffer>
    <experiments>5</experiments>
</comment>
<comment type="domain">
    <text evidence="10 11">The viral OTU domain (vOTU) and its N-terminal extension is responsible for ubiquitin and ISG15 binding and for the deubiquitination and deISGylation activities.</text>
</comment>
<comment type="miscellaneous">
    <text evidence="13">Classified as His(+) endonuclease since it has a histidine upstream of the active site that coordinates the first cation.</text>
</comment>
<comment type="similarity">
    <text evidence="13">Belongs to the Bunyavirales RNA polymerase family.</text>
</comment>
<accession>Q6TQR6</accession>
<accession>Q6TFZ7</accession>
<accession>Q6TQF5</accession>
<organismHost>
    <name type="scientific">Bos taurus</name>
    <name type="common">Bovine</name>
    <dbReference type="NCBI Taxonomy" id="9913"/>
</organismHost>
<organismHost>
    <name type="scientific">Capra hircus</name>
    <name type="common">Goat</name>
    <dbReference type="NCBI Taxonomy" id="9925"/>
</organismHost>
<organismHost>
    <name type="scientific">Homo sapiens</name>
    <name type="common">Human</name>
    <dbReference type="NCBI Taxonomy" id="9606"/>
</organismHost>
<organismHost>
    <name type="scientific">Hyalomma</name>
    <dbReference type="NCBI Taxonomy" id="34625"/>
</organismHost>
<organismHost>
    <name type="scientific">Ovis aries</name>
    <name type="common">Sheep</name>
    <dbReference type="NCBI Taxonomy" id="9940"/>
</organismHost>
<organismHost>
    <name type="scientific">Rhipicephalus microplus</name>
    <name type="common">Cattle tick</name>
    <name type="synonym">Boophilus microplus</name>
    <dbReference type="NCBI Taxonomy" id="6941"/>
</organismHost>
<sequence>MDFLRSLDWTQVIAGQYVSNPRFNISDYFEIVRQPGDGNCFYHSIAELTMPNKTDHSYHYIKRLTESAARKYYQEEPEARLVGLSLEDYLKRMLSDNEWGSTLEASMLAKEMGITIIIWTVAASDEVEAGIKFGDGDVFTAVNLLHSGQTHFDALRILPQFETDTREALSLMDRVIAVDQLTSSSSDELQDYEDLALALTSAEESNRRSSLDEVTLSKKQAEILRQKASQLSKLVNKSQNIPTRVGRVLDCMFNCKLCVEISADTLILRPESKEKIGEIMSLRQLGHKLLTRDKQIKQEFSRMKLYVTKDLLDHLDVGGLLRAAFPGTGIERHMQLLHSEMILDICTVSLGVMLSTFLYGSNNKNKKKFITNCLLSTALSGKKVYKVLGNLGNELLYKAPRKALATVCSALFGKQINKLQNCFRTISPVSLLALRNLDFDCLSVQDYNGMIENMSKLDNTDVEFNHREIADLNQLTSRLITLRKEKDTDLLKQWFPESDLTRRSIRNAANAEEFVISEFFKKKDIMKFISTSGRAMSAGKIGNVLSYAHNLYLSKSSLNMTSEDISQLLIEIKRLYALQEDSEVEPIAIICDGIESNMKQLFAILPPDCARECEVLFDDIRNSPTHSTAWKHALRLKGTAYEGLFANCYGWQYIPEDIKPSLTMLIQTLFPDKFEDFLDRTQLHPEFRDLTPDFSLTQKVHFKRNQIPSVENVQISIDATLPESVEAVPVTERKMFPLPETPLSEVHSIERIMENFTRLMHGGRLSTKKRDGDPAEQGNQQSITEHESSSISAFKDYGERGIVEENHMKFSGEDQLETRQLLLVEVGFQTDIDGKIRTDHKKWKDILKLLELLGIKCSFIACADCSSTPPDRWWITEDRVRVLKNSVSFLFNKLSRNSPTEVTDIVVGAISTQKVRSYLKAGTATKTPVSTKDVLETWEKMKEHILNRPTGLTLPTSLEQAMRKGLVEGVVISKEGSESCINMLKENLDRITDEFERTKFKHELTQNITTSEKMLLSWLSEDIKSSRCGECLSNIKKAVDETANLSEKIELLAYNLQLTNHCSNCHPNGVNISNTSNVCKRCPKIEVVSHCENKGFEDSNECLTDLDRLVRLTLPGKTEKERRVKRNVEYLIKLMMSMSGIDCIKYPTGQLITHGRVSAKHNDGNLKDRSDDDQRLAEKIDTVRKELSESKLKDYSTYARGVISNSLKNLSRQGKSKCSVPRSWLEKVLFDLKVPTKDEEVLINIRNSLKARSEFVRNNDKLLIRSKEELKKCFDVQSFKLKKNKQPVPFQVDCILFKEVAAECMKRYIGTPYEGIVDTLVSLINVLTRFTWFQEVVLYGKICETFLRCCTEFNRSGVKLVKIRHCNINLSVKLPSNKKENMLCCLYSGNMELLQGPFYLNRRQAVLGSSYLYIVITLYIQVLQQYRCLEVINSVSEKTLQDIENHSMTLLEDSFREITFALEGRFEESYKIRTSRCRASGNFLNRSSRDHFISVVSGLNLVYGFLIKDNLLANSQQQNKQLQMLRFGMLAGLSRLVCPNELGKKFSTSCRRIEDNIARLYLQTSIYCSVRDVEDNVKHWKQRDLCPEVTIPCFTVYGTFVNSDRQLIFDIYNVHIYNKEMDNFDEGCISVLEETAERHMLWELDLMNSLCSDEKKDTRTARLLLGCPNVRKAANREGKKLLKLNSDTSTDTQSIASEVSDRRSYSSSKSRIRSIFGRYNSQKKPFELRSGLEVFNDPFNDYQQAITDICQFSEYTPNKESILKDCLQIIRKNPSHTMGSFELIQAISEFGMSKFPPENIDKARRDPKNWVSISEVTETTSIVASPRTHMMLKDCFKIILGTENKKIVKMLRGKLKKLGAISTNIEIGKRDCLDLLSTVDGLTDQQKENIVNGIFEPSKLSFYHWKELVKKNIDEVLLTEDGNLIFCWLKTISSSVKGSLKKRLKFMNIHSPELMPENCLFSSEEFNELIKLKKLLLNEQQDEQELKQDLLISSWIKCITACKDFASINDKIQKFIYHLSEELYDIRLQHLELSKLKQEHPSVSFTKEEVLIKRLEKNFLKQHNLEIMETVNLVFFAALSAPWCLHYKALESYLVRHPEILDCGSKEDCKLTLLDLSVSKLLVCLYQKDDEELINSSSLKLGFLVKYVVTLFTSNGEPFSLSLNDGGLDLDLHKTTDEKLLHQTKIVFAKIGLSGNSYDFIWTTQMIANSNFNVCKRLTGRSTGERLPRSVRSKVIYEMVKLVGETGMAILQQLAFAQALNYEHRFYAVLAPKAQLGGARDLLVQETGTKVMHATTEMFSRNLLKTTSDDGLTNPHLKETILNVGLDCLANMRNLDGKPISEGSNLVNFYKVICISGDNTKWGPIHCCSFFSGMMQQVLKNVPDWCSFYKLTFIKNLCRQVEIPAGSIKKILNVLRYRLCSKGGVEQHSEEDLRRLLTDNLDSWDGNDTVKFLVTTYISKGLMALNSYNHMGQGIHHATSSVLTSLAAVLFEELAIFYLKRSLPQTTVHVEHAGSSDDYAKCIVVTGILSKELYSQYDETFWKHACRLKNFTAAVQRCCQMKDSAKTLVSDCFLEFYSEFMMGYRVTPAVIKFMFTGLINSSVTSPQSLMQACQVSSQQAMYNSVPLVTNTAFTLLRQQIFFNHVEDFIRRYGILTLGTLSPFGRLFVPTYSGLVSSAVALEDAEVIARAAQTLQMNSVSIQSSSLTTLDSLGRSRTSSTAEDSSSVSDTTAASHDSGSSSSSFSFELNRPLSETELQFIKALSSLKSTQACEVIQNRITGLYCNSNEGPLDRHNVIYSSRMADSCDWLKDGKRRGNLELANRIQSVLCILIAGYYRSFGGEGTEKQVKASLNRDDNKIIEDPMIQLIPEKLRRELERLGVSRMEVDELMPSISPDDTLAQLVAKKLISLNVSTEEYSAEVSRLKQTLTARNVLHGLAGGIKELSLPIYTIFMKSYFFKDNVFLSLTDRWSTKHSTNYRDSCGKQLKGRIITKYTHWLDTFLGCSVSINRHTTVKEPSLFNPNIRCVNLITFEDGLRELSVIQSHLKVFENEFTNLNLQFSDPNRQKLRIVESRPAESELEANRAVIVKTKLFSATEQVRLSNNPAVVMGYLLDESAISEVKPTKVDFSNLLKDRFKIMQFFPSVFTLIKMLTDESSDSEKSGLSPDLQQVARYSNHLTLLSRMIQQAKPTVTVFYMLKGNLMNTEPTVAELVSYGIKEGRFFRLSDTGVDASTYSVKYWKILHCISAIGCLPLSQADKSSLLMSFLNWRVNMDIRTSDCPLSSHEASILSEFDGQVIANILASELSSVKRDSEREGLTDLLDYLNSPTELLKKKPYLGTTCKFNTWGDSNRSGKFTYSSRSGESIGIFIAGKLHIHLSSESVALLCETERQVLSWMSKRRTEVITKEQHQLFLSLLPQSHECLQKHKDGSALSVIPDSSNPRLLKFVPLKKGLAVVKIKKQILTVKKQVVFDAESEPRLQWGHGCLSIVYDETDTQTTYHENLLKVKHLVDCSTDRKKLLPQSVFSDSKVVLSRIKFKTELLLNSLTLLHCFLKHAPSDAIMEVESKSSLLHKYLKSGGVRQRNTEVLFREKLNKVVIKDNLEQGVEEEIEFCNNLTKTVSENPLPLSCWSEVQNYIEDIGFNNVLVNIDRNTVKSELLWKFTLDTNVSTTSTIKDVRTLVSYVSTETIPKFLLAFLLYEEVLMNLINQCKAVKELINSTGLSDLELESLLTLCAFYFQSECSKRDGPRCSFAALLSLIHEDWQRIGKNILVRANNELGDVSLKVNIVLVPLKDMSKPKSERVVMARRSLNHALSLMFLDEMSLPELKSLSVNCKMGNFEGQECFEFTILKDNSARLDYNKLIDHCVDMEKKREAVRAVEDLILMLTGRAVKPSAVTQFVHGDEQCQEQISLDDLMANDTVTDFPDREAEALKTGNLGFNWDSD</sequence>
<gene>
    <name type="primary">L</name>
</gene>